<keyword id="KW-1015">Disulfide bond</keyword>
<keyword id="KW-0325">Glycoprotein</keyword>
<keyword id="KW-0964">Secreted</keyword>
<keyword id="KW-0732">Signal</keyword>
<keyword id="KW-0843">Virulence</keyword>
<reference key="1">
    <citation type="journal article" date="2008" name="Mol. Plant Microbe Interact.">
        <title>Structure of the glucanase inhibitor protein (GIP) family from phytophthora species suggests coevolution with plant endo-beta-1,3-glucanases.</title>
        <authorList>
            <person name="Damasceno C.M."/>
            <person name="Bishop J.G."/>
            <person name="Ripoll D.R."/>
            <person name="Win J."/>
            <person name="Kamoun S."/>
            <person name="Rose J.K."/>
        </authorList>
    </citation>
    <scope>NUCLEOTIDE SEQUENCE [GENOMIC DNA]</scope>
    <scope>FUNCTION</scope>
    <scope>SUBCELLULAR LOCATION</scope>
    <scope>INTERACTION WITH HOST ENDOGLUCANASES</scope>
    <source>
        <strain>US970001</strain>
    </source>
</reference>
<feature type="signal peptide" evidence="1">
    <location>
        <begin position="1"/>
        <end position="15"/>
    </location>
</feature>
<feature type="chain" id="PRO_0000448095" description="Glucanase inhibitor protein 2">
    <location>
        <begin position="16"/>
        <end position="256"/>
    </location>
</feature>
<feature type="domain" description="Peptidase S1" evidence="2">
    <location>
        <begin position="27"/>
        <end position="254"/>
    </location>
</feature>
<feature type="glycosylation site" description="N-linked (GlcNAc...) asparagine" evidence="3">
    <location>
        <position position="87"/>
    </location>
</feature>
<feature type="glycosylation site" description="N-linked (GlcNAc...) asparagine" evidence="3">
    <location>
        <position position="102"/>
    </location>
</feature>
<feature type="glycosylation site" description="N-linked (GlcNAc...) asparagine" evidence="3">
    <location>
        <position position="107"/>
    </location>
</feature>
<feature type="glycosylation site" description="N-linked (GlcNAc...) asparagine" evidence="3">
    <location>
        <position position="157"/>
    </location>
</feature>
<feature type="disulfide bond" evidence="2">
    <location>
        <begin position="54"/>
        <end position="70"/>
    </location>
</feature>
<feature type="disulfide bond" evidence="2">
    <location>
        <begin position="177"/>
        <end position="189"/>
    </location>
</feature>
<feature type="disulfide bond" evidence="2">
    <location>
        <begin position="199"/>
        <end position="230"/>
    </location>
</feature>
<gene>
    <name evidence="5" type="primary">GIP2</name>
</gene>
<protein>
    <recommendedName>
        <fullName evidence="5">Glucanase inhibitor protein 2</fullName>
    </recommendedName>
</protein>
<organism>
    <name type="scientific">Phytophthora infestans</name>
    <name type="common">Potato late blight agent</name>
    <name type="synonym">Botrytis infestans</name>
    <dbReference type="NCBI Taxonomy" id="4787"/>
    <lineage>
        <taxon>Eukaryota</taxon>
        <taxon>Sar</taxon>
        <taxon>Stramenopiles</taxon>
        <taxon>Oomycota</taxon>
        <taxon>Peronosporales</taxon>
        <taxon>Peronosporaceae</taxon>
        <taxon>Phytophthora</taxon>
    </lineage>
</organism>
<evidence type="ECO:0000255" key="1"/>
<evidence type="ECO:0000255" key="2">
    <source>
        <dbReference type="PROSITE-ProRule" id="PRU00274"/>
    </source>
</evidence>
<evidence type="ECO:0000255" key="3">
    <source>
        <dbReference type="PROSITE-ProRule" id="PRU00498"/>
    </source>
</evidence>
<evidence type="ECO:0000269" key="4">
    <source>
    </source>
</evidence>
<evidence type="ECO:0000303" key="5">
    <source>
    </source>
</evidence>
<evidence type="ECO:0000305" key="6"/>
<evidence type="ECO:0000305" key="7">
    <source>
    </source>
</evidence>
<name>GIP2_PHYIN</name>
<sequence length="256" mass="26763">MKLISTIAAATTAFGAPNADHTSRQLIFGGGIIPSGTKTYTAGIRTSADGDTYCGGSLISPTHVLTTSICTGYKEPKFVSVGTHYLNGTQDGEQIKVVSAQNHTSLNFSSGTYDFALLTLEKPSKFIPVKLPKADDSDIKPGMWSKAMGWGVTSYPNGSLSYELQGVSLEVWANDECSQVFNIGDTSVCAGGLPGKDACVADTGGPLIKENGLGDLDDILIGLVNWGYGCGDAGSPTVYSRVSTATEWINSVTKGQ</sequence>
<dbReference type="EMBL" id="EU443392">
    <property type="protein sequence ID" value="ACA23210.1"/>
    <property type="molecule type" value="Genomic_DNA"/>
</dbReference>
<dbReference type="SMR" id="B1AC87"/>
<dbReference type="GlyCosmos" id="B1AC87">
    <property type="glycosylation" value="4 sites, No reported glycans"/>
</dbReference>
<dbReference type="VEuPathDB" id="FungiDB:PITG_13641"/>
<dbReference type="GO" id="GO:0005576">
    <property type="term" value="C:extracellular region"/>
    <property type="evidence" value="ECO:0007669"/>
    <property type="project" value="UniProtKB-SubCell"/>
</dbReference>
<dbReference type="GO" id="GO:0004252">
    <property type="term" value="F:serine-type endopeptidase activity"/>
    <property type="evidence" value="ECO:0007669"/>
    <property type="project" value="InterPro"/>
</dbReference>
<dbReference type="GO" id="GO:0006508">
    <property type="term" value="P:proteolysis"/>
    <property type="evidence" value="ECO:0007669"/>
    <property type="project" value="InterPro"/>
</dbReference>
<dbReference type="CDD" id="cd00190">
    <property type="entry name" value="Tryp_SPc"/>
    <property type="match status" value="1"/>
</dbReference>
<dbReference type="FunFam" id="2.40.10.10:FF:000156">
    <property type="entry name" value="MIP06385p"/>
    <property type="match status" value="1"/>
</dbReference>
<dbReference type="Gene3D" id="2.40.10.10">
    <property type="entry name" value="Trypsin-like serine proteases"/>
    <property type="match status" value="1"/>
</dbReference>
<dbReference type="InterPro" id="IPR050430">
    <property type="entry name" value="Peptidase_S1"/>
</dbReference>
<dbReference type="InterPro" id="IPR009003">
    <property type="entry name" value="Peptidase_S1_PA"/>
</dbReference>
<dbReference type="InterPro" id="IPR043504">
    <property type="entry name" value="Peptidase_S1_PA_chymotrypsin"/>
</dbReference>
<dbReference type="InterPro" id="IPR001314">
    <property type="entry name" value="Peptidase_S1A"/>
</dbReference>
<dbReference type="InterPro" id="IPR001254">
    <property type="entry name" value="Trypsin_dom"/>
</dbReference>
<dbReference type="PANTHER" id="PTHR24276:SF98">
    <property type="entry name" value="FI18310P1-RELATED"/>
    <property type="match status" value="1"/>
</dbReference>
<dbReference type="PANTHER" id="PTHR24276">
    <property type="entry name" value="POLYSERASE-RELATED"/>
    <property type="match status" value="1"/>
</dbReference>
<dbReference type="Pfam" id="PF00089">
    <property type="entry name" value="Trypsin"/>
    <property type="match status" value="1"/>
</dbReference>
<dbReference type="PRINTS" id="PR00722">
    <property type="entry name" value="CHYMOTRYPSIN"/>
</dbReference>
<dbReference type="SMART" id="SM00020">
    <property type="entry name" value="Tryp_SPc"/>
    <property type="match status" value="1"/>
</dbReference>
<dbReference type="SUPFAM" id="SSF50494">
    <property type="entry name" value="Trypsin-like serine proteases"/>
    <property type="match status" value="1"/>
</dbReference>
<dbReference type="PROSITE" id="PS50240">
    <property type="entry name" value="TRYPSIN_DOM"/>
    <property type="match status" value="1"/>
</dbReference>
<comment type="function">
    <text evidence="4">Secreted effector that suppresses host plant glucan elicitor-mediated defense responses (PubMed:18624645). Targets host endoglucanases and inhibits the endoglucanase-mediated release of elicitor-active glucan oligosaccharides from P.infestans cell walls (PubMed:18624645).</text>
</comment>
<comment type="subunit">
    <text evidence="4">Forms an apoplastic complex with host endoglucanases in tomato leaves during P.infestans infection.</text>
</comment>
<comment type="subcellular location">
    <subcellularLocation>
        <location evidence="4">Secreted</location>
    </subcellularLocation>
</comment>
<comment type="similarity">
    <text evidence="6">Belongs to the peptidase S1 family.</text>
</comment>
<comment type="caution">
    <text evidence="7">None of the predicted glucanase inhibitor proteins (GIPS) has an intact catalytic triad, therefore, GIPs are proteolytically inactive.</text>
</comment>
<accession>B1AC87</accession>
<proteinExistence type="evidence at protein level"/>